<accession>A7ZTV0</accession>
<comment type="function">
    <text evidence="1">Key component of the proton channel; it plays a direct role in the translocation of protons across the membrane.</text>
</comment>
<comment type="subunit">
    <text evidence="1">F-type ATPases have 2 components, CF(1) - the catalytic core - and CF(0) - the membrane proton channel. CF(1) has five subunits: alpha(3), beta(3), gamma(1), delta(1), epsilon(1). CF(0) has three main subunits: a(1), b(2) and c(9-12). The alpha and beta chains form an alternating ring which encloses part of the gamma chain. CF(1) is attached to CF(0) by a central stalk formed by the gamma and epsilon chains, while a peripheral stalk is formed by the delta and b chains.</text>
</comment>
<comment type="subcellular location">
    <subcellularLocation>
        <location evidence="1">Cell inner membrane</location>
        <topology evidence="1">Multi-pass membrane protein</topology>
    </subcellularLocation>
</comment>
<comment type="similarity">
    <text evidence="1">Belongs to the ATPase A chain family.</text>
</comment>
<evidence type="ECO:0000255" key="1">
    <source>
        <dbReference type="HAMAP-Rule" id="MF_01393"/>
    </source>
</evidence>
<protein>
    <recommendedName>
        <fullName evidence="1">ATP synthase subunit a</fullName>
    </recommendedName>
    <alternativeName>
        <fullName evidence="1">ATP synthase F0 sector subunit a</fullName>
    </alternativeName>
    <alternativeName>
        <fullName evidence="1">F-ATPase subunit 6</fullName>
    </alternativeName>
</protein>
<gene>
    <name evidence="1" type="primary">atpB</name>
    <name type="ordered locus">EcE24377A_4254</name>
</gene>
<feature type="chain" id="PRO_0000362303" description="ATP synthase subunit a">
    <location>
        <begin position="1"/>
        <end position="271"/>
    </location>
</feature>
<feature type="transmembrane region" description="Helical" evidence="1">
    <location>
        <begin position="40"/>
        <end position="60"/>
    </location>
</feature>
<feature type="transmembrane region" description="Helical" evidence="1">
    <location>
        <begin position="100"/>
        <end position="120"/>
    </location>
</feature>
<feature type="transmembrane region" description="Helical" evidence="1">
    <location>
        <begin position="146"/>
        <end position="166"/>
    </location>
</feature>
<feature type="transmembrane region" description="Helical" evidence="1">
    <location>
        <begin position="220"/>
        <end position="240"/>
    </location>
</feature>
<feature type="transmembrane region" description="Helical" evidence="1">
    <location>
        <begin position="242"/>
        <end position="262"/>
    </location>
</feature>
<name>ATP6_ECO24</name>
<proteinExistence type="inferred from homology"/>
<reference key="1">
    <citation type="journal article" date="2008" name="J. Bacteriol.">
        <title>The pangenome structure of Escherichia coli: comparative genomic analysis of E. coli commensal and pathogenic isolates.</title>
        <authorList>
            <person name="Rasko D.A."/>
            <person name="Rosovitz M.J."/>
            <person name="Myers G.S.A."/>
            <person name="Mongodin E.F."/>
            <person name="Fricke W.F."/>
            <person name="Gajer P."/>
            <person name="Crabtree J."/>
            <person name="Sebaihia M."/>
            <person name="Thomson N.R."/>
            <person name="Chaudhuri R."/>
            <person name="Henderson I.R."/>
            <person name="Sperandio V."/>
            <person name="Ravel J."/>
        </authorList>
    </citation>
    <scope>NUCLEOTIDE SEQUENCE [LARGE SCALE GENOMIC DNA]</scope>
    <source>
        <strain>E24377A / ETEC</strain>
    </source>
</reference>
<sequence length="271" mass="30303">MASENMTPQDYIGHHLNNLQLDLRTFSLVDPQNPPATFWTINIDSMFFSVVLGLLFLVLFRSVAKKATSGVPGKFQTAIELVIGFVNGSVKDMYHGKSKLIAPLALTIFVWVFLMNLMDLLPIDLLPYIAEHVLGLPALRVVPSADVNVTLSMALGVFILILFYSIKMKGIGGFTKELTLQPFNHWAFIPVNLILEGVSLLSKPVSLGLRLFGNMYAGELIFILIAGLLPWWSQWILNVPWAIFHILIITLQAFIFMVLTIVYLSMASEEH</sequence>
<keyword id="KW-0066">ATP synthesis</keyword>
<keyword id="KW-0997">Cell inner membrane</keyword>
<keyword id="KW-1003">Cell membrane</keyword>
<keyword id="KW-0138">CF(0)</keyword>
<keyword id="KW-0375">Hydrogen ion transport</keyword>
<keyword id="KW-0406">Ion transport</keyword>
<keyword id="KW-0472">Membrane</keyword>
<keyword id="KW-1185">Reference proteome</keyword>
<keyword id="KW-0812">Transmembrane</keyword>
<keyword id="KW-1133">Transmembrane helix</keyword>
<keyword id="KW-0813">Transport</keyword>
<organism>
    <name type="scientific">Escherichia coli O139:H28 (strain E24377A / ETEC)</name>
    <dbReference type="NCBI Taxonomy" id="331111"/>
    <lineage>
        <taxon>Bacteria</taxon>
        <taxon>Pseudomonadati</taxon>
        <taxon>Pseudomonadota</taxon>
        <taxon>Gammaproteobacteria</taxon>
        <taxon>Enterobacterales</taxon>
        <taxon>Enterobacteriaceae</taxon>
        <taxon>Escherichia</taxon>
    </lineage>
</organism>
<dbReference type="EMBL" id="CP000800">
    <property type="protein sequence ID" value="ABV17977.1"/>
    <property type="molecule type" value="Genomic_DNA"/>
</dbReference>
<dbReference type="RefSeq" id="WP_000135625.1">
    <property type="nucleotide sequence ID" value="NC_009801.1"/>
</dbReference>
<dbReference type="BMRB" id="A7ZTV0"/>
<dbReference type="SMR" id="A7ZTV0"/>
<dbReference type="GeneID" id="93778229"/>
<dbReference type="KEGG" id="ecw:EcE24377A_4254"/>
<dbReference type="HOGENOM" id="CLU_041018_1_0_6"/>
<dbReference type="Proteomes" id="UP000001122">
    <property type="component" value="Chromosome"/>
</dbReference>
<dbReference type="GO" id="GO:0005886">
    <property type="term" value="C:plasma membrane"/>
    <property type="evidence" value="ECO:0007669"/>
    <property type="project" value="UniProtKB-SubCell"/>
</dbReference>
<dbReference type="GO" id="GO:0045259">
    <property type="term" value="C:proton-transporting ATP synthase complex"/>
    <property type="evidence" value="ECO:0007669"/>
    <property type="project" value="UniProtKB-KW"/>
</dbReference>
<dbReference type="GO" id="GO:0046933">
    <property type="term" value="F:proton-transporting ATP synthase activity, rotational mechanism"/>
    <property type="evidence" value="ECO:0007669"/>
    <property type="project" value="UniProtKB-UniRule"/>
</dbReference>
<dbReference type="GO" id="GO:0042777">
    <property type="term" value="P:proton motive force-driven plasma membrane ATP synthesis"/>
    <property type="evidence" value="ECO:0007669"/>
    <property type="project" value="TreeGrafter"/>
</dbReference>
<dbReference type="CDD" id="cd00310">
    <property type="entry name" value="ATP-synt_Fo_a_6"/>
    <property type="match status" value="1"/>
</dbReference>
<dbReference type="FunFam" id="1.20.120.220:FF:000002">
    <property type="entry name" value="ATP synthase subunit a"/>
    <property type="match status" value="1"/>
</dbReference>
<dbReference type="Gene3D" id="1.20.120.220">
    <property type="entry name" value="ATP synthase, F0 complex, subunit A"/>
    <property type="match status" value="1"/>
</dbReference>
<dbReference type="HAMAP" id="MF_01393">
    <property type="entry name" value="ATP_synth_a_bact"/>
    <property type="match status" value="1"/>
</dbReference>
<dbReference type="InterPro" id="IPR045082">
    <property type="entry name" value="ATP_syn_F0_a_bact/chloroplast"/>
</dbReference>
<dbReference type="InterPro" id="IPR000568">
    <property type="entry name" value="ATP_synth_F0_asu"/>
</dbReference>
<dbReference type="InterPro" id="IPR023011">
    <property type="entry name" value="ATP_synth_F0_asu_AS"/>
</dbReference>
<dbReference type="InterPro" id="IPR035908">
    <property type="entry name" value="F0_ATP_A_sf"/>
</dbReference>
<dbReference type="NCBIfam" id="TIGR01131">
    <property type="entry name" value="ATP_synt_6_or_A"/>
    <property type="match status" value="1"/>
</dbReference>
<dbReference type="NCBIfam" id="NF004477">
    <property type="entry name" value="PRK05815.1-1"/>
    <property type="match status" value="1"/>
</dbReference>
<dbReference type="PANTHER" id="PTHR42823">
    <property type="entry name" value="ATP SYNTHASE SUBUNIT A, CHLOROPLASTIC"/>
    <property type="match status" value="1"/>
</dbReference>
<dbReference type="PANTHER" id="PTHR42823:SF3">
    <property type="entry name" value="ATP SYNTHASE SUBUNIT A, CHLOROPLASTIC"/>
    <property type="match status" value="1"/>
</dbReference>
<dbReference type="Pfam" id="PF00119">
    <property type="entry name" value="ATP-synt_A"/>
    <property type="match status" value="1"/>
</dbReference>
<dbReference type="PRINTS" id="PR00123">
    <property type="entry name" value="ATPASEA"/>
</dbReference>
<dbReference type="SUPFAM" id="SSF81336">
    <property type="entry name" value="F1F0 ATP synthase subunit A"/>
    <property type="match status" value="1"/>
</dbReference>
<dbReference type="PROSITE" id="PS00449">
    <property type="entry name" value="ATPASE_A"/>
    <property type="match status" value="1"/>
</dbReference>